<keyword id="KW-0131">Cell cycle</keyword>
<keyword id="KW-0132">Cell division</keyword>
<keyword id="KW-0963">Cytoplasm</keyword>
<keyword id="KW-0342">GTP-binding</keyword>
<keyword id="KW-0547">Nucleotide-binding</keyword>
<keyword id="KW-0717">Septation</keyword>
<comment type="function">
    <text evidence="1">Essential cell division protein that forms a contractile ring structure (Z ring) at the future cell division site. The regulation of the ring assembly controls the timing and the location of cell division. One of the functions of the FtsZ ring is to recruit other cell division proteins to the septum to produce a new cell wall between the dividing cells. Binds GTP and shows GTPase activity.</text>
</comment>
<comment type="subunit">
    <text evidence="1">Homodimer. Polymerizes to form a dynamic ring structure in a strictly GTP-dependent manner. Interacts directly with several other division proteins.</text>
</comment>
<comment type="subcellular location">
    <subcellularLocation>
        <location evidence="1">Cytoplasm</location>
    </subcellularLocation>
    <text evidence="1">Assembles at midcell at the inner surface of the cytoplasmic membrane.</text>
</comment>
<comment type="similarity">
    <text evidence="1">Belongs to the FtsZ family.</text>
</comment>
<proteinExistence type="inferred from homology"/>
<feature type="chain" id="PRO_0000114357" description="Cell division protein FtsZ">
    <location>
        <begin position="1"/>
        <end position="385"/>
    </location>
</feature>
<feature type="binding site" evidence="1">
    <location>
        <begin position="37"/>
        <end position="41"/>
    </location>
    <ligand>
        <name>GTP</name>
        <dbReference type="ChEBI" id="CHEBI:37565"/>
    </ligand>
</feature>
<feature type="binding site" evidence="1">
    <location>
        <begin position="125"/>
        <end position="127"/>
    </location>
    <ligand>
        <name>GTP</name>
        <dbReference type="ChEBI" id="CHEBI:37565"/>
    </ligand>
</feature>
<feature type="binding site" evidence="1">
    <location>
        <position position="156"/>
    </location>
    <ligand>
        <name>GTP</name>
        <dbReference type="ChEBI" id="CHEBI:37565"/>
    </ligand>
</feature>
<feature type="binding site" evidence="1">
    <location>
        <position position="160"/>
    </location>
    <ligand>
        <name>GTP</name>
        <dbReference type="ChEBI" id="CHEBI:37565"/>
    </ligand>
</feature>
<feature type="binding site" evidence="1">
    <location>
        <position position="204"/>
    </location>
    <ligand>
        <name>GTP</name>
        <dbReference type="ChEBI" id="CHEBI:37565"/>
    </ligand>
</feature>
<organism>
    <name type="scientific">Helicobacter pylori (strain J99 / ATCC 700824)</name>
    <name type="common">Campylobacter pylori J99</name>
    <dbReference type="NCBI Taxonomy" id="85963"/>
    <lineage>
        <taxon>Bacteria</taxon>
        <taxon>Pseudomonadati</taxon>
        <taxon>Campylobacterota</taxon>
        <taxon>Epsilonproteobacteria</taxon>
        <taxon>Campylobacterales</taxon>
        <taxon>Helicobacteraceae</taxon>
        <taxon>Helicobacter</taxon>
    </lineage>
</organism>
<gene>
    <name evidence="1" type="primary">ftsZ</name>
    <name type="ordered locus">jhp_0913</name>
</gene>
<name>FTSZ_HELPJ</name>
<sequence length="385" mass="40935">MVHQSEMENYNIGQASIEEVSDPAYKGAKIVVVGVGGGGSNMIKHLVEYGVHQDVTPIATNTDGQHLKNNPAPVKILLGKESTGGLGAGGVPDIGKKAAEESADEIREAIKDAKLVIVSTGLGGGTGTGATPTIVKIAKEVGALTIAIVTKPFKYEGNQKRKRAEEGLKELEQSSDSILVIPNDKILLTMKKNASTTECYREVDDVLVRAVSGISTIITKPGNINVDFADLKSALGFKGFALMGIGEATGEDSAKLAVQNAIQSPLLDDASIEGAKSIIVFFEHHPDYPMMAYSQACDFIQDQAHQDVDVKFGQHTSENIPIDHVRVTIIATGSERNSNGAGLESIATPSQPVVKPTRKVGNGEYLRIPTEEELSIPTTIRIQQD</sequence>
<reference key="1">
    <citation type="journal article" date="1999" name="Nature">
        <title>Genomic sequence comparison of two unrelated isolates of the human gastric pathogen Helicobacter pylori.</title>
        <authorList>
            <person name="Alm R.A."/>
            <person name="Ling L.-S.L."/>
            <person name="Moir D.T."/>
            <person name="King B.L."/>
            <person name="Brown E.D."/>
            <person name="Doig P.C."/>
            <person name="Smith D.R."/>
            <person name="Noonan B."/>
            <person name="Guild B.C."/>
            <person name="deJonge B.L."/>
            <person name="Carmel G."/>
            <person name="Tummino P.J."/>
            <person name="Caruso A."/>
            <person name="Uria-Nickelsen M."/>
            <person name="Mills D.M."/>
            <person name="Ives C."/>
            <person name="Gibson R."/>
            <person name="Merberg D."/>
            <person name="Mills S.D."/>
            <person name="Jiang Q."/>
            <person name="Taylor D.E."/>
            <person name="Vovis G.F."/>
            <person name="Trust T.J."/>
        </authorList>
    </citation>
    <scope>NUCLEOTIDE SEQUENCE [LARGE SCALE GENOMIC DNA]</scope>
    <source>
        <strain>J99 / ATCC 700824</strain>
    </source>
</reference>
<dbReference type="EMBL" id="AE001439">
    <property type="protein sequence ID" value="AAD06488.1"/>
    <property type="molecule type" value="Genomic_DNA"/>
</dbReference>
<dbReference type="PIR" id="D71873">
    <property type="entry name" value="D71873"/>
</dbReference>
<dbReference type="RefSeq" id="WP_000233657.1">
    <property type="nucleotide sequence ID" value="NZ_CP011330.1"/>
</dbReference>
<dbReference type="SMR" id="Q9ZKM2"/>
<dbReference type="KEGG" id="hpj:jhp_0913"/>
<dbReference type="PATRIC" id="fig|85963.30.peg.47"/>
<dbReference type="eggNOG" id="COG0206">
    <property type="taxonomic scope" value="Bacteria"/>
</dbReference>
<dbReference type="Proteomes" id="UP000000804">
    <property type="component" value="Chromosome"/>
</dbReference>
<dbReference type="GO" id="GO:0032153">
    <property type="term" value="C:cell division site"/>
    <property type="evidence" value="ECO:0007669"/>
    <property type="project" value="UniProtKB-UniRule"/>
</dbReference>
<dbReference type="GO" id="GO:0005737">
    <property type="term" value="C:cytoplasm"/>
    <property type="evidence" value="ECO:0007669"/>
    <property type="project" value="UniProtKB-SubCell"/>
</dbReference>
<dbReference type="GO" id="GO:0005525">
    <property type="term" value="F:GTP binding"/>
    <property type="evidence" value="ECO:0007669"/>
    <property type="project" value="UniProtKB-UniRule"/>
</dbReference>
<dbReference type="GO" id="GO:0003924">
    <property type="term" value="F:GTPase activity"/>
    <property type="evidence" value="ECO:0007669"/>
    <property type="project" value="UniProtKB-UniRule"/>
</dbReference>
<dbReference type="GO" id="GO:0000917">
    <property type="term" value="P:division septum assembly"/>
    <property type="evidence" value="ECO:0007669"/>
    <property type="project" value="UniProtKB-KW"/>
</dbReference>
<dbReference type="GO" id="GO:0043093">
    <property type="term" value="P:FtsZ-dependent cytokinesis"/>
    <property type="evidence" value="ECO:0007669"/>
    <property type="project" value="UniProtKB-UniRule"/>
</dbReference>
<dbReference type="GO" id="GO:0051258">
    <property type="term" value="P:protein polymerization"/>
    <property type="evidence" value="ECO:0007669"/>
    <property type="project" value="UniProtKB-UniRule"/>
</dbReference>
<dbReference type="CDD" id="cd02201">
    <property type="entry name" value="FtsZ_type1"/>
    <property type="match status" value="1"/>
</dbReference>
<dbReference type="FunFam" id="3.30.1330.20:FF:000016">
    <property type="entry name" value="Cell division protein FtsZ"/>
    <property type="match status" value="1"/>
</dbReference>
<dbReference type="FunFam" id="3.40.50.1440:FF:000029">
    <property type="entry name" value="Cell division protein FtsZ"/>
    <property type="match status" value="1"/>
</dbReference>
<dbReference type="Gene3D" id="3.30.1330.20">
    <property type="entry name" value="Tubulin/FtsZ, C-terminal domain"/>
    <property type="match status" value="1"/>
</dbReference>
<dbReference type="Gene3D" id="3.40.50.1440">
    <property type="entry name" value="Tubulin/FtsZ, GTPase domain"/>
    <property type="match status" value="1"/>
</dbReference>
<dbReference type="HAMAP" id="MF_00909">
    <property type="entry name" value="FtsZ"/>
    <property type="match status" value="1"/>
</dbReference>
<dbReference type="InterPro" id="IPR000158">
    <property type="entry name" value="Cell_div_FtsZ"/>
</dbReference>
<dbReference type="InterPro" id="IPR020805">
    <property type="entry name" value="Cell_div_FtsZ_CS"/>
</dbReference>
<dbReference type="InterPro" id="IPR045061">
    <property type="entry name" value="FtsZ/CetZ"/>
</dbReference>
<dbReference type="InterPro" id="IPR024757">
    <property type="entry name" value="FtsZ_C"/>
</dbReference>
<dbReference type="InterPro" id="IPR008280">
    <property type="entry name" value="Tub_FtsZ_C"/>
</dbReference>
<dbReference type="InterPro" id="IPR037103">
    <property type="entry name" value="Tubulin/FtsZ-like_C"/>
</dbReference>
<dbReference type="InterPro" id="IPR018316">
    <property type="entry name" value="Tubulin/FtsZ_2-layer-sand-dom"/>
</dbReference>
<dbReference type="InterPro" id="IPR036525">
    <property type="entry name" value="Tubulin/FtsZ_GTPase_sf"/>
</dbReference>
<dbReference type="InterPro" id="IPR003008">
    <property type="entry name" value="Tubulin_FtsZ_GTPase"/>
</dbReference>
<dbReference type="NCBIfam" id="TIGR00065">
    <property type="entry name" value="ftsZ"/>
    <property type="match status" value="1"/>
</dbReference>
<dbReference type="PANTHER" id="PTHR30314">
    <property type="entry name" value="CELL DIVISION PROTEIN FTSZ-RELATED"/>
    <property type="match status" value="1"/>
</dbReference>
<dbReference type="PANTHER" id="PTHR30314:SF3">
    <property type="entry name" value="MITOCHONDRIAL DIVISION PROTEIN FSZA"/>
    <property type="match status" value="1"/>
</dbReference>
<dbReference type="Pfam" id="PF12327">
    <property type="entry name" value="FtsZ_C"/>
    <property type="match status" value="1"/>
</dbReference>
<dbReference type="Pfam" id="PF00091">
    <property type="entry name" value="Tubulin"/>
    <property type="match status" value="1"/>
</dbReference>
<dbReference type="PRINTS" id="PR00423">
    <property type="entry name" value="CELLDVISFTSZ"/>
</dbReference>
<dbReference type="SMART" id="SM00864">
    <property type="entry name" value="Tubulin"/>
    <property type="match status" value="1"/>
</dbReference>
<dbReference type="SMART" id="SM00865">
    <property type="entry name" value="Tubulin_C"/>
    <property type="match status" value="1"/>
</dbReference>
<dbReference type="SUPFAM" id="SSF55307">
    <property type="entry name" value="Tubulin C-terminal domain-like"/>
    <property type="match status" value="1"/>
</dbReference>
<dbReference type="SUPFAM" id="SSF52490">
    <property type="entry name" value="Tubulin nucleotide-binding domain-like"/>
    <property type="match status" value="1"/>
</dbReference>
<dbReference type="PROSITE" id="PS01134">
    <property type="entry name" value="FTSZ_1"/>
    <property type="match status" value="1"/>
</dbReference>
<dbReference type="PROSITE" id="PS01135">
    <property type="entry name" value="FTSZ_2"/>
    <property type="match status" value="1"/>
</dbReference>
<protein>
    <recommendedName>
        <fullName evidence="1">Cell division protein FtsZ</fullName>
    </recommendedName>
</protein>
<accession>Q9ZKM2</accession>
<evidence type="ECO:0000255" key="1">
    <source>
        <dbReference type="HAMAP-Rule" id="MF_00909"/>
    </source>
</evidence>